<proteinExistence type="evidence at protein level"/>
<evidence type="ECO:0000250" key="1">
    <source>
        <dbReference type="UniProtKB" id="P13517"/>
    </source>
</evidence>
<evidence type="ECO:0000269" key="2">
    <source>
    </source>
</evidence>
<evidence type="ECO:0000269" key="3">
    <source>
    </source>
</evidence>
<evidence type="ECO:0000305" key="4"/>
<feature type="chain" id="PRO_0000204641" description="F-actin-capping protein subunit beta">
    <location>
        <begin position="1"/>
        <end position="268"/>
    </location>
</feature>
<protein>
    <recommendedName>
        <fullName>F-actin-capping protein subunit beta</fullName>
    </recommendedName>
</protein>
<keyword id="KW-0117">Actin capping</keyword>
<keyword id="KW-0009">Actin-binding</keyword>
<keyword id="KW-0963">Cytoplasm</keyword>
<keyword id="KW-0206">Cytoskeleton</keyword>
<keyword id="KW-0539">Nucleus</keyword>
<keyword id="KW-1185">Reference proteome</keyword>
<reference key="1">
    <citation type="journal article" date="2002" name="Nature">
        <title>The genome sequence of Schizosaccharomyces pombe.</title>
        <authorList>
            <person name="Wood V."/>
            <person name="Gwilliam R."/>
            <person name="Rajandream M.A."/>
            <person name="Lyne M.H."/>
            <person name="Lyne R."/>
            <person name="Stewart A."/>
            <person name="Sgouros J.G."/>
            <person name="Peat N."/>
            <person name="Hayles J."/>
            <person name="Baker S.G."/>
            <person name="Basham D."/>
            <person name="Bowman S."/>
            <person name="Brooks K."/>
            <person name="Brown D."/>
            <person name="Brown S."/>
            <person name="Chillingworth T."/>
            <person name="Churcher C.M."/>
            <person name="Collins M."/>
            <person name="Connor R."/>
            <person name="Cronin A."/>
            <person name="Davis P."/>
            <person name="Feltwell T."/>
            <person name="Fraser A."/>
            <person name="Gentles S."/>
            <person name="Goble A."/>
            <person name="Hamlin N."/>
            <person name="Harris D.E."/>
            <person name="Hidalgo J."/>
            <person name="Hodgson G."/>
            <person name="Holroyd S."/>
            <person name="Hornsby T."/>
            <person name="Howarth S."/>
            <person name="Huckle E.J."/>
            <person name="Hunt S."/>
            <person name="Jagels K."/>
            <person name="James K.D."/>
            <person name="Jones L."/>
            <person name="Jones M."/>
            <person name="Leather S."/>
            <person name="McDonald S."/>
            <person name="McLean J."/>
            <person name="Mooney P."/>
            <person name="Moule S."/>
            <person name="Mungall K.L."/>
            <person name="Murphy L.D."/>
            <person name="Niblett D."/>
            <person name="Odell C."/>
            <person name="Oliver K."/>
            <person name="O'Neil S."/>
            <person name="Pearson D."/>
            <person name="Quail M.A."/>
            <person name="Rabbinowitsch E."/>
            <person name="Rutherford K.M."/>
            <person name="Rutter S."/>
            <person name="Saunders D."/>
            <person name="Seeger K."/>
            <person name="Sharp S."/>
            <person name="Skelton J."/>
            <person name="Simmonds M.N."/>
            <person name="Squares R."/>
            <person name="Squares S."/>
            <person name="Stevens K."/>
            <person name="Taylor K."/>
            <person name="Taylor R.G."/>
            <person name="Tivey A."/>
            <person name="Walsh S.V."/>
            <person name="Warren T."/>
            <person name="Whitehead S."/>
            <person name="Woodward J.R."/>
            <person name="Volckaert G."/>
            <person name="Aert R."/>
            <person name="Robben J."/>
            <person name="Grymonprez B."/>
            <person name="Weltjens I."/>
            <person name="Vanstreels E."/>
            <person name="Rieger M."/>
            <person name="Schaefer M."/>
            <person name="Mueller-Auer S."/>
            <person name="Gabel C."/>
            <person name="Fuchs M."/>
            <person name="Duesterhoeft A."/>
            <person name="Fritzc C."/>
            <person name="Holzer E."/>
            <person name="Moestl D."/>
            <person name="Hilbert H."/>
            <person name="Borzym K."/>
            <person name="Langer I."/>
            <person name="Beck A."/>
            <person name="Lehrach H."/>
            <person name="Reinhardt R."/>
            <person name="Pohl T.M."/>
            <person name="Eger P."/>
            <person name="Zimmermann W."/>
            <person name="Wedler H."/>
            <person name="Wambutt R."/>
            <person name="Purnelle B."/>
            <person name="Goffeau A."/>
            <person name="Cadieu E."/>
            <person name="Dreano S."/>
            <person name="Gloux S."/>
            <person name="Lelaure V."/>
            <person name="Mottier S."/>
            <person name="Galibert F."/>
            <person name="Aves S.J."/>
            <person name="Xiang Z."/>
            <person name="Hunt C."/>
            <person name="Moore K."/>
            <person name="Hurst S.M."/>
            <person name="Lucas M."/>
            <person name="Rochet M."/>
            <person name="Gaillardin C."/>
            <person name="Tallada V.A."/>
            <person name="Garzon A."/>
            <person name="Thode G."/>
            <person name="Daga R.R."/>
            <person name="Cruzado L."/>
            <person name="Jimenez J."/>
            <person name="Sanchez M."/>
            <person name="del Rey F."/>
            <person name="Benito J."/>
            <person name="Dominguez A."/>
            <person name="Revuelta J.L."/>
            <person name="Moreno S."/>
            <person name="Armstrong J."/>
            <person name="Forsburg S.L."/>
            <person name="Cerutti L."/>
            <person name="Lowe T."/>
            <person name="McCombie W.R."/>
            <person name="Paulsen I."/>
            <person name="Potashkin J."/>
            <person name="Shpakovski G.V."/>
            <person name="Ussery D."/>
            <person name="Barrell B.G."/>
            <person name="Nurse P."/>
        </authorList>
    </citation>
    <scope>NUCLEOTIDE SEQUENCE [LARGE SCALE GENOMIC DNA]</scope>
    <source>
        <strain>972 / ATCC 24843</strain>
    </source>
</reference>
<reference key="2">
    <citation type="journal article" date="2005" name="Mol. Biol. Cell">
        <title>Profilin-mediated competition between capping protein and formin Cdc12p during cytokinesis in fission yeast.</title>
        <authorList>
            <person name="Kovar D.R."/>
            <person name="Wu J.-Q."/>
            <person name="Pollard T.D."/>
        </authorList>
    </citation>
    <scope>FUNCTION</scope>
    <scope>SUBUNIT</scope>
    <scope>SUBCELLULAR LOCATION</scope>
</reference>
<reference key="3">
    <citation type="journal article" date="2006" name="Nat. Biotechnol.">
        <title>ORFeome cloning and global analysis of protein localization in the fission yeast Schizosaccharomyces pombe.</title>
        <authorList>
            <person name="Matsuyama A."/>
            <person name="Arai R."/>
            <person name="Yashiroda Y."/>
            <person name="Shirai A."/>
            <person name="Kamata A."/>
            <person name="Sekido S."/>
            <person name="Kobayashi Y."/>
            <person name="Hashimoto A."/>
            <person name="Hamamoto M."/>
            <person name="Hiraoka Y."/>
            <person name="Horinouchi S."/>
            <person name="Yoshida M."/>
        </authorList>
    </citation>
    <scope>SUBCELLULAR LOCATION [LARGE SCALE ANALYSIS]</scope>
</reference>
<accession>Q9HGP5</accession>
<name>CAPZB_SCHPO</name>
<dbReference type="EMBL" id="CU329670">
    <property type="protein sequence ID" value="CAC05483.1"/>
    <property type="molecule type" value="Genomic_DNA"/>
</dbReference>
<dbReference type="RefSeq" id="NP_593619.3">
    <property type="nucleotide sequence ID" value="NM_001019050.3"/>
</dbReference>
<dbReference type="SMR" id="Q9HGP5"/>
<dbReference type="BioGRID" id="279812">
    <property type="interactions" value="44"/>
</dbReference>
<dbReference type="FunCoup" id="Q9HGP5">
    <property type="interactions" value="517"/>
</dbReference>
<dbReference type="STRING" id="284812.Q9HGP5"/>
<dbReference type="iPTMnet" id="Q9HGP5"/>
<dbReference type="PaxDb" id="4896-SPAC631.01c.1"/>
<dbReference type="EnsemblFungi" id="SPAC631.01c.1">
    <property type="protein sequence ID" value="SPAC631.01c.1:pep"/>
    <property type="gene ID" value="SPAC631.01c"/>
</dbReference>
<dbReference type="GeneID" id="2543390"/>
<dbReference type="KEGG" id="spo:2543390"/>
<dbReference type="PomBase" id="SPAC631.01c">
    <property type="gene designation" value="acp2"/>
</dbReference>
<dbReference type="VEuPathDB" id="FungiDB:SPAC631.01c"/>
<dbReference type="eggNOG" id="KOG3174">
    <property type="taxonomic scope" value="Eukaryota"/>
</dbReference>
<dbReference type="HOGENOM" id="CLU_045864_1_1_1"/>
<dbReference type="InParanoid" id="Q9HGP5"/>
<dbReference type="OMA" id="WSNKYYP"/>
<dbReference type="PhylomeDB" id="Q9HGP5"/>
<dbReference type="Reactome" id="R-SPO-9013405">
    <property type="pathway name" value="RHOD GTPase cycle"/>
</dbReference>
<dbReference type="Reactome" id="R-SPO-983231">
    <property type="pathway name" value="Factors involved in megakaryocyte development and platelet production"/>
</dbReference>
<dbReference type="PRO" id="PR:Q9HGP5"/>
<dbReference type="Proteomes" id="UP000002485">
    <property type="component" value="Chromosome I"/>
</dbReference>
<dbReference type="GO" id="GO:0099079">
    <property type="term" value="C:actin body"/>
    <property type="evidence" value="ECO:0000314"/>
    <property type="project" value="PomBase"/>
</dbReference>
<dbReference type="GO" id="GO:0030479">
    <property type="term" value="C:actin cortical patch"/>
    <property type="evidence" value="ECO:0000314"/>
    <property type="project" value="PomBase"/>
</dbReference>
<dbReference type="GO" id="GO:0032153">
    <property type="term" value="C:cell division site"/>
    <property type="evidence" value="ECO:0000314"/>
    <property type="project" value="PomBase"/>
</dbReference>
<dbReference type="GO" id="GO:0005829">
    <property type="term" value="C:cytosol"/>
    <property type="evidence" value="ECO:0007005"/>
    <property type="project" value="PomBase"/>
</dbReference>
<dbReference type="GO" id="GO:0008290">
    <property type="term" value="C:F-actin capping protein complex"/>
    <property type="evidence" value="ECO:0000314"/>
    <property type="project" value="PomBase"/>
</dbReference>
<dbReference type="GO" id="GO:0043332">
    <property type="term" value="C:mating projection tip"/>
    <property type="evidence" value="ECO:0000314"/>
    <property type="project" value="PomBase"/>
</dbReference>
<dbReference type="GO" id="GO:0031097">
    <property type="term" value="C:medial cortex"/>
    <property type="evidence" value="ECO:0000314"/>
    <property type="project" value="PomBase"/>
</dbReference>
<dbReference type="GO" id="GO:0005634">
    <property type="term" value="C:nucleus"/>
    <property type="evidence" value="ECO:0000314"/>
    <property type="project" value="PomBase"/>
</dbReference>
<dbReference type="GO" id="GO:0051015">
    <property type="term" value="F:actin filament binding"/>
    <property type="evidence" value="ECO:0000314"/>
    <property type="project" value="PomBase"/>
</dbReference>
<dbReference type="GO" id="GO:0044396">
    <property type="term" value="P:actin cortical patch organization"/>
    <property type="evidence" value="ECO:0000315"/>
    <property type="project" value="PomBase"/>
</dbReference>
<dbReference type="GO" id="GO:0051016">
    <property type="term" value="P:barbed-end actin filament capping"/>
    <property type="evidence" value="ECO:0000314"/>
    <property type="project" value="PomBase"/>
</dbReference>
<dbReference type="GO" id="GO:0000902">
    <property type="term" value="P:cell morphogenesis"/>
    <property type="evidence" value="ECO:0000318"/>
    <property type="project" value="GO_Central"/>
</dbReference>
<dbReference type="GO" id="GO:1904600">
    <property type="term" value="P:mating projection actin fusion focus assembly"/>
    <property type="evidence" value="ECO:0000315"/>
    <property type="project" value="PomBase"/>
</dbReference>
<dbReference type="GO" id="GO:1903475">
    <property type="term" value="P:mitotic actomyosin contractile ring assembly"/>
    <property type="evidence" value="ECO:0000316"/>
    <property type="project" value="PomBase"/>
</dbReference>
<dbReference type="GO" id="GO:1902404">
    <property type="term" value="P:mitotic actomyosin contractile ring contraction"/>
    <property type="evidence" value="ECO:0000315"/>
    <property type="project" value="PomBase"/>
</dbReference>
<dbReference type="FunFam" id="1.20.58.570:FF:000001">
    <property type="entry name" value="F-actin-capping protein subunit beta"/>
    <property type="match status" value="1"/>
</dbReference>
<dbReference type="Gene3D" id="1.20.58.570">
    <property type="match status" value="1"/>
</dbReference>
<dbReference type="Gene3D" id="3.90.1150.210">
    <property type="entry name" value="F-actin capping protein, beta subunit"/>
    <property type="match status" value="1"/>
</dbReference>
<dbReference type="InterPro" id="IPR037282">
    <property type="entry name" value="CapZ_alpha/beta"/>
</dbReference>
<dbReference type="InterPro" id="IPR042276">
    <property type="entry name" value="CapZ_alpha/beta_2"/>
</dbReference>
<dbReference type="InterPro" id="IPR001698">
    <property type="entry name" value="CAPZB"/>
</dbReference>
<dbReference type="InterPro" id="IPR043175">
    <property type="entry name" value="CAPZB_N"/>
</dbReference>
<dbReference type="InterPro" id="IPR019771">
    <property type="entry name" value="F-actin_capping_bsu_CS"/>
</dbReference>
<dbReference type="PANTHER" id="PTHR10619">
    <property type="entry name" value="F-ACTIN-CAPPING PROTEIN SUBUNIT BETA"/>
    <property type="match status" value="1"/>
</dbReference>
<dbReference type="PANTHER" id="PTHR10619:SF0">
    <property type="entry name" value="F-ACTIN-CAPPING PROTEIN SUBUNIT BETA ISOFORMS 1 AND 2"/>
    <property type="match status" value="1"/>
</dbReference>
<dbReference type="Pfam" id="PF01115">
    <property type="entry name" value="F_actin_cap_B"/>
    <property type="match status" value="1"/>
</dbReference>
<dbReference type="PRINTS" id="PR00192">
    <property type="entry name" value="FACTINCAPB"/>
</dbReference>
<dbReference type="SUPFAM" id="SSF90096">
    <property type="entry name" value="Subunits of heterodimeric actin filament capping protein Capz"/>
    <property type="match status" value="1"/>
</dbReference>
<dbReference type="PROSITE" id="PS00231">
    <property type="entry name" value="F_ACTIN_CAPPING_BETA"/>
    <property type="match status" value="1"/>
</dbReference>
<gene>
    <name type="primary">acp2</name>
    <name type="ORF">SPAC631.01c</name>
</gene>
<organism>
    <name type="scientific">Schizosaccharomyces pombe (strain 972 / ATCC 24843)</name>
    <name type="common">Fission yeast</name>
    <dbReference type="NCBI Taxonomy" id="284812"/>
    <lineage>
        <taxon>Eukaryota</taxon>
        <taxon>Fungi</taxon>
        <taxon>Dikarya</taxon>
        <taxon>Ascomycota</taxon>
        <taxon>Taphrinomycotina</taxon>
        <taxon>Schizosaccharomycetes</taxon>
        <taxon>Schizosaccharomycetales</taxon>
        <taxon>Schizosaccharomycetaceae</taxon>
        <taxon>Schizosaccharomyces</taxon>
    </lineage>
</organism>
<sequence>MNSEDAALDLLRRLNPKDISKNLDTILSVAPDLADVLLSSVDQPLKVNTCSESGNQYLLCDFNRDGDSYRSPWSNKYDPPLEDGLVSTDRVRKLEVSLNEAIRVYLDLYYEGGVSSVYLWDQDDSYAGAVLIKKASTSNSSGWDSIHVFECLPTTETNVYDYRLTSTIILFLSSGSEEQSALPSKALNLSGHLTRQTSQRLPAADDDTEIANVGKLVEEMETRMRNFLQDVYFGKTKDIINQTRSIQPVSDAQPNDSALRSVLNDLSI</sequence>
<comment type="function">
    <text evidence="2">F-actin-capping proteins bind in a Ca(2+)-independent manner to the fast growing ends of actin filaments (barbed end) thereby blocking the exchange of subunits at these ends. Unlike other capping proteins (such as gelsolin and severin), these proteins do not sever actin filaments. Competes with formin cdc12 for attachment to the actin filaments barbed ends. Slowly replaces cdc12 on the barbed ends in preparation for filament disassembly during contractile ring constriction.</text>
</comment>
<comment type="subunit">
    <text evidence="2">Component of the F-actin capping complex, composed of a heterodimer of an alpha and a beta subunit.</text>
</comment>
<comment type="subcellular location">
    <subcellularLocation>
        <location evidence="1">Cytoplasm</location>
        <location evidence="1">Cytoskeleton</location>
        <location evidence="1">Actin patch</location>
    </subcellularLocation>
    <subcellularLocation>
        <location evidence="2">Cytoplasm</location>
        <location evidence="2">Cytoskeleton</location>
    </subcellularLocation>
    <subcellularLocation>
        <location evidence="3">Nucleus</location>
    </subcellularLocation>
    <text evidence="3">Cell division site. Localizes to cell tips during interphase.</text>
</comment>
<comment type="similarity">
    <text evidence="4">Belongs to the F-actin-capping protein beta subunit family.</text>
</comment>